<gene>
    <name type="primary">nrdF1</name>
    <name type="ordered locus">Rv1981c</name>
    <name type="ORF">MTCY39.38</name>
</gene>
<feature type="chain" id="PRO_0000190486" description="Ribonucleoside-diphosphate reductase subunit beta nrdF1">
    <location>
        <begin position="1"/>
        <end position="322"/>
    </location>
</feature>
<feature type="active site" evidence="2">
    <location>
        <position position="108"/>
    </location>
</feature>
<feature type="binding site" evidence="2">
    <location>
        <position position="70"/>
    </location>
    <ligand>
        <name>Fe cation</name>
        <dbReference type="ChEBI" id="CHEBI:24875"/>
        <label>1</label>
    </ligand>
</feature>
<feature type="binding site" evidence="2">
    <location>
        <position position="101"/>
    </location>
    <ligand>
        <name>Fe cation</name>
        <dbReference type="ChEBI" id="CHEBI:24875"/>
        <label>1</label>
    </ligand>
</feature>
<feature type="binding site" evidence="1">
    <location>
        <position position="101"/>
    </location>
    <ligand>
        <name>Fe cation</name>
        <dbReference type="ChEBI" id="CHEBI:24875"/>
        <label>2</label>
    </ligand>
</feature>
<feature type="binding site" evidence="2">
    <location>
        <position position="104"/>
    </location>
    <ligand>
        <name>Fe cation</name>
        <dbReference type="ChEBI" id="CHEBI:24875"/>
        <label>1</label>
    </ligand>
</feature>
<feature type="binding site" evidence="1">
    <location>
        <position position="161"/>
    </location>
    <ligand>
        <name>Fe cation</name>
        <dbReference type="ChEBI" id="CHEBI:24875"/>
        <label>2</label>
    </ligand>
</feature>
<feature type="binding site" evidence="1">
    <location>
        <position position="195"/>
    </location>
    <ligand>
        <name>Fe cation</name>
        <dbReference type="ChEBI" id="CHEBI:24875"/>
        <label>2</label>
    </ligand>
</feature>
<feature type="binding site" evidence="1">
    <location>
        <position position="198"/>
    </location>
    <ligand>
        <name>Fe cation</name>
        <dbReference type="ChEBI" id="CHEBI:24875"/>
        <label>2</label>
    </ligand>
</feature>
<feature type="sequence conflict" description="In Ref. 1; AAB81405." evidence="4" ref="1">
    <original>LKRKA</original>
    <variation>QAQR</variation>
    <location>
        <begin position="151"/>
        <end position="155"/>
    </location>
</feature>
<reference key="1">
    <citation type="journal article" date="1997" name="J. Bacteriol.">
        <title>Characterization of two genes encoding the Mycobacterium tuberculosis ribonucleotide reductase small subunit.</title>
        <authorList>
            <person name="Yang F."/>
            <person name="Curran S.C."/>
            <person name="Li L.S."/>
            <person name="Avarbock D."/>
            <person name="Graf J.D."/>
            <person name="Chua M.M."/>
            <person name="Lu G."/>
            <person name="Salem J."/>
            <person name="Rubin H."/>
        </authorList>
    </citation>
    <scope>NUCLEOTIDE SEQUENCE [GENOMIC DNA]</scope>
    <scope>IDENTIFICATION</scope>
    <scope>LACK OF FUNCTION IN E.COLI</scope>
    <source>
        <strain>ATCC 35801 / TMC 107 / Erdman</strain>
    </source>
</reference>
<reference key="2">
    <citation type="journal article" date="1998" name="Nature">
        <title>Deciphering the biology of Mycobacterium tuberculosis from the complete genome sequence.</title>
        <authorList>
            <person name="Cole S.T."/>
            <person name="Brosch R."/>
            <person name="Parkhill J."/>
            <person name="Garnier T."/>
            <person name="Churcher C.M."/>
            <person name="Harris D.E."/>
            <person name="Gordon S.V."/>
            <person name="Eiglmeier K."/>
            <person name="Gas S."/>
            <person name="Barry C.E. III"/>
            <person name="Tekaia F."/>
            <person name="Badcock K."/>
            <person name="Basham D."/>
            <person name="Brown D."/>
            <person name="Chillingworth T."/>
            <person name="Connor R."/>
            <person name="Davies R.M."/>
            <person name="Devlin K."/>
            <person name="Feltwell T."/>
            <person name="Gentles S."/>
            <person name="Hamlin N."/>
            <person name="Holroyd S."/>
            <person name="Hornsby T."/>
            <person name="Jagels K."/>
            <person name="Krogh A."/>
            <person name="McLean J."/>
            <person name="Moule S."/>
            <person name="Murphy L.D."/>
            <person name="Oliver S."/>
            <person name="Osborne J."/>
            <person name="Quail M.A."/>
            <person name="Rajandream M.A."/>
            <person name="Rogers J."/>
            <person name="Rutter S."/>
            <person name="Seeger K."/>
            <person name="Skelton S."/>
            <person name="Squares S."/>
            <person name="Squares R."/>
            <person name="Sulston J.E."/>
            <person name="Taylor K."/>
            <person name="Whitehead S."/>
            <person name="Barrell B.G."/>
        </authorList>
    </citation>
    <scope>NUCLEOTIDE SEQUENCE [LARGE SCALE GENOMIC DNA]</scope>
    <source>
        <strain>ATCC 25618 / H37Rv</strain>
    </source>
</reference>
<reference key="3">
    <citation type="journal article" date="2003" name="Infect. Immun.">
        <title>Ribonucleotide reduction in Mycobacterium tuberculosis: function and expression of genes encoding class Ib and class II ribonucleotide reductases.</title>
        <authorList>
            <person name="Dawes S.S."/>
            <person name="Warner D.F."/>
            <person name="Tsenova L."/>
            <person name="Timm J."/>
            <person name="McKinney J.D."/>
            <person name="Kaplan G."/>
            <person name="Rubin H."/>
            <person name="Mizrahi V."/>
        </authorList>
    </citation>
    <scope>INDUCTION</scope>
    <source>
        <strain>ATCC 25618 / H37Rv</strain>
    </source>
</reference>
<reference key="4">
    <citation type="journal article" date="2011" name="Mol. Cell. Proteomics">
        <title>Proteogenomic analysis of Mycobacterium tuberculosis by high resolution mass spectrometry.</title>
        <authorList>
            <person name="Kelkar D.S."/>
            <person name="Kumar D."/>
            <person name="Kumar P."/>
            <person name="Balakrishnan L."/>
            <person name="Muthusamy B."/>
            <person name="Yadav A.K."/>
            <person name="Shrivastava P."/>
            <person name="Marimuthu A."/>
            <person name="Anand S."/>
            <person name="Sundaram H."/>
            <person name="Kingsbury R."/>
            <person name="Harsha H.C."/>
            <person name="Nair B."/>
            <person name="Prasad T.S."/>
            <person name="Chauhan D.S."/>
            <person name="Katoch K."/>
            <person name="Katoch V.M."/>
            <person name="Kumar P."/>
            <person name="Chaerkady R."/>
            <person name="Ramachandran S."/>
            <person name="Dash D."/>
            <person name="Pandey A."/>
        </authorList>
    </citation>
    <scope>IDENTIFICATION BY MASS SPECTROMETRY [LARGE SCALE ANALYSIS]</scope>
    <source>
        <strain>ATCC 25618 / H37Rv</strain>
    </source>
</reference>
<sequence>MTGKLVERVHAINWNRLLDAKDLQVWERLTGNFWLPEKIPLSNDLASWQTLSSTEQQTTIRVFTGLTLLDTAQATVGAVAMIDDAVTPHEEAVLTNMAFMESVHAKSYSSIFSTLCSTKQIDDAFDWSEQNPYLQRKAQIIVDYYRGDDALKRKASSVMLESFLFYSGFYLPMYWSSRGKLTNTADLIRLIIRDEAVHGYYIGYKCQRGLADLTDAERADHREYTCELLHTLYANEIDYAHDLYDELGWTDDVLPYMRYNANKALANLGYQPAFDRDTCQVNPAVRAALDPGAGENHDFFSGSGSSYVMGTHQPTTDTDWDF</sequence>
<proteinExistence type="evidence at protein level"/>
<organism>
    <name type="scientific">Mycobacterium tuberculosis (strain ATCC 25618 / H37Rv)</name>
    <dbReference type="NCBI Taxonomy" id="83332"/>
    <lineage>
        <taxon>Bacteria</taxon>
        <taxon>Bacillati</taxon>
        <taxon>Actinomycetota</taxon>
        <taxon>Actinomycetes</taxon>
        <taxon>Mycobacteriales</taxon>
        <taxon>Mycobacteriaceae</taxon>
        <taxon>Mycobacterium</taxon>
        <taxon>Mycobacterium tuberculosis complex</taxon>
    </lineage>
</organism>
<name>RIR2A_MYCTU</name>
<comment type="function">
    <text evidence="1">Provides the precursors necessary for DNA synthesis. Catalyzes the biosynthesis of deoxyribonucleotides from the corresponding ribonucleotides (By similarity). Two genes for this protein are present in M.tuberculosis; this is thought to not be the active form. When coexpressed in E.coli with nrdE the 2 proteins do not complement a temperature-sensitive E.coli mutant, whereas the other gene (nrdF2) does complement.</text>
</comment>
<comment type="catalytic activity">
    <reaction evidence="2">
        <text>a 2'-deoxyribonucleoside 5'-diphosphate + [thioredoxin]-disulfide + H2O = a ribonucleoside 5'-diphosphate + [thioredoxin]-dithiol</text>
        <dbReference type="Rhea" id="RHEA:23252"/>
        <dbReference type="Rhea" id="RHEA-COMP:10698"/>
        <dbReference type="Rhea" id="RHEA-COMP:10700"/>
        <dbReference type="ChEBI" id="CHEBI:15377"/>
        <dbReference type="ChEBI" id="CHEBI:29950"/>
        <dbReference type="ChEBI" id="CHEBI:50058"/>
        <dbReference type="ChEBI" id="CHEBI:57930"/>
        <dbReference type="ChEBI" id="CHEBI:73316"/>
        <dbReference type="EC" id="1.17.4.1"/>
    </reaction>
</comment>
<comment type="cofactor">
    <cofactor evidence="1">
        <name>Fe cation</name>
        <dbReference type="ChEBI" id="CHEBI:24875"/>
    </cofactor>
    <text evidence="1">Binds 2 iron ions per subunit.</text>
</comment>
<comment type="subunit">
    <text evidence="1">Tetramer of two alpha and two beta subunits.</text>
</comment>
<comment type="induction">
    <text evidence="3">Expressed in growing cells (at protein level). Transcription not induced under oxygen-limiting conditions.</text>
</comment>
<comment type="similarity">
    <text evidence="4">Belongs to the ribonucleoside diphosphate reductase small chain family.</text>
</comment>
<protein>
    <recommendedName>
        <fullName>Ribonucleoside-diphosphate reductase subunit beta nrdF1</fullName>
        <ecNumber>1.17.4.1</ecNumber>
    </recommendedName>
    <alternativeName>
        <fullName>Ribonucleotide reductase R2-1 small subunit</fullName>
    </alternativeName>
    <alternativeName>
        <fullName>Ribonucleotide reductase small subunit 1</fullName>
    </alternativeName>
</protein>
<keyword id="KW-0215">Deoxyribonucleotide synthesis</keyword>
<keyword id="KW-0408">Iron</keyword>
<keyword id="KW-0479">Metal-binding</keyword>
<keyword id="KW-0560">Oxidoreductase</keyword>
<keyword id="KW-1185">Reference proteome</keyword>
<dbReference type="EC" id="1.17.4.1"/>
<dbReference type="EMBL" id="U41099">
    <property type="protein sequence ID" value="AAB81405.1"/>
    <property type="molecule type" value="Genomic_DNA"/>
</dbReference>
<dbReference type="EMBL" id="AL123456">
    <property type="protein sequence ID" value="CCP44750.1"/>
    <property type="molecule type" value="Genomic_DNA"/>
</dbReference>
<dbReference type="PIR" id="C70756">
    <property type="entry name" value="C70756"/>
</dbReference>
<dbReference type="RefSeq" id="YP_177853.1">
    <property type="nucleotide sequence ID" value="NC_000962.3"/>
</dbReference>
<dbReference type="SMR" id="P9WH73"/>
<dbReference type="FunCoup" id="P9WH73">
    <property type="interactions" value="106"/>
</dbReference>
<dbReference type="STRING" id="83332.Rv1981c"/>
<dbReference type="PaxDb" id="83332-Rv1981c"/>
<dbReference type="GeneID" id="885923"/>
<dbReference type="KEGG" id="mtu:Rv1981c"/>
<dbReference type="KEGG" id="mtv:RVBD_1981c"/>
<dbReference type="TubercuList" id="Rv1981c"/>
<dbReference type="eggNOG" id="COG0208">
    <property type="taxonomic scope" value="Bacteria"/>
</dbReference>
<dbReference type="InParanoid" id="P9WH73"/>
<dbReference type="OrthoDB" id="9766544at2"/>
<dbReference type="PhylomeDB" id="P9WH73"/>
<dbReference type="BRENDA" id="1.17.4.1">
    <property type="organism ID" value="3445"/>
</dbReference>
<dbReference type="Proteomes" id="UP000001584">
    <property type="component" value="Chromosome"/>
</dbReference>
<dbReference type="GO" id="GO:0005971">
    <property type="term" value="C:ribonucleoside-diphosphate reductase complex"/>
    <property type="evidence" value="ECO:0007669"/>
    <property type="project" value="InterPro"/>
</dbReference>
<dbReference type="GO" id="GO:0046872">
    <property type="term" value="F:metal ion binding"/>
    <property type="evidence" value="ECO:0007669"/>
    <property type="project" value="UniProtKB-KW"/>
</dbReference>
<dbReference type="GO" id="GO:0004748">
    <property type="term" value="F:ribonucleoside-diphosphate reductase activity, thioredoxin disulfide as acceptor"/>
    <property type="evidence" value="ECO:0007669"/>
    <property type="project" value="UniProtKB-EC"/>
</dbReference>
<dbReference type="GO" id="GO:0009263">
    <property type="term" value="P:deoxyribonucleotide biosynthetic process"/>
    <property type="evidence" value="ECO:0007669"/>
    <property type="project" value="UniProtKB-KW"/>
</dbReference>
<dbReference type="CDD" id="cd01049">
    <property type="entry name" value="RNRR2"/>
    <property type="match status" value="1"/>
</dbReference>
<dbReference type="Gene3D" id="1.10.620.20">
    <property type="entry name" value="Ribonucleotide Reductase, subunit A"/>
    <property type="match status" value="1"/>
</dbReference>
<dbReference type="InterPro" id="IPR009078">
    <property type="entry name" value="Ferritin-like_SF"/>
</dbReference>
<dbReference type="InterPro" id="IPR012348">
    <property type="entry name" value="RNR-like"/>
</dbReference>
<dbReference type="InterPro" id="IPR026494">
    <property type="entry name" value="RNR_NrdF-like"/>
</dbReference>
<dbReference type="InterPro" id="IPR033909">
    <property type="entry name" value="RNR_small"/>
</dbReference>
<dbReference type="InterPro" id="IPR030475">
    <property type="entry name" value="RNR_small_AS"/>
</dbReference>
<dbReference type="InterPro" id="IPR000358">
    <property type="entry name" value="RNR_small_fam"/>
</dbReference>
<dbReference type="NCBIfam" id="NF007182">
    <property type="entry name" value="PRK09614.1-1"/>
    <property type="match status" value="1"/>
</dbReference>
<dbReference type="NCBIfam" id="NF007183">
    <property type="entry name" value="PRK09614.1-2"/>
    <property type="match status" value="1"/>
</dbReference>
<dbReference type="NCBIfam" id="NF010572">
    <property type="entry name" value="PRK13965.1"/>
    <property type="match status" value="1"/>
</dbReference>
<dbReference type="NCBIfam" id="NF010574">
    <property type="entry name" value="PRK13967.1"/>
    <property type="match status" value="1"/>
</dbReference>
<dbReference type="NCBIfam" id="TIGR04171">
    <property type="entry name" value="RNR_1b_NrdF"/>
    <property type="match status" value="1"/>
</dbReference>
<dbReference type="PANTHER" id="PTHR23409">
    <property type="entry name" value="RIBONUCLEOSIDE-DIPHOSPHATE REDUCTASE SMALL CHAIN"/>
    <property type="match status" value="1"/>
</dbReference>
<dbReference type="PANTHER" id="PTHR23409:SF18">
    <property type="entry name" value="RIBONUCLEOSIDE-DIPHOSPHATE REDUCTASE SUBUNIT M2"/>
    <property type="match status" value="1"/>
</dbReference>
<dbReference type="Pfam" id="PF00268">
    <property type="entry name" value="Ribonuc_red_sm"/>
    <property type="match status" value="1"/>
</dbReference>
<dbReference type="PIRSF" id="PIRSF000355">
    <property type="entry name" value="NrdB"/>
    <property type="match status" value="1"/>
</dbReference>
<dbReference type="SUPFAM" id="SSF47240">
    <property type="entry name" value="Ferritin-like"/>
    <property type="match status" value="1"/>
</dbReference>
<dbReference type="PROSITE" id="PS00368">
    <property type="entry name" value="RIBORED_SMALL"/>
    <property type="match status" value="1"/>
</dbReference>
<accession>P9WH73</accession>
<accession>L0TAZ9</accession>
<accession>Q10840</accession>
<accession>Q50548</accession>
<evidence type="ECO:0000250" key="1"/>
<evidence type="ECO:0000255" key="2">
    <source>
        <dbReference type="PROSITE-ProRule" id="PRU10014"/>
    </source>
</evidence>
<evidence type="ECO:0000269" key="3">
    <source>
    </source>
</evidence>
<evidence type="ECO:0000305" key="4"/>